<gene>
    <name evidence="1" type="primary">pyrG</name>
    <name type="ordered locus">Shal_1221</name>
</gene>
<name>PYRG_SHEHH</name>
<reference key="1">
    <citation type="submission" date="2008-01" db="EMBL/GenBank/DDBJ databases">
        <title>Complete sequence of Shewanella halifaxensis HAW-EB4.</title>
        <authorList>
            <consortium name="US DOE Joint Genome Institute"/>
            <person name="Copeland A."/>
            <person name="Lucas S."/>
            <person name="Lapidus A."/>
            <person name="Glavina del Rio T."/>
            <person name="Dalin E."/>
            <person name="Tice H."/>
            <person name="Bruce D."/>
            <person name="Goodwin L."/>
            <person name="Pitluck S."/>
            <person name="Sims D."/>
            <person name="Brettin T."/>
            <person name="Detter J.C."/>
            <person name="Han C."/>
            <person name="Kuske C.R."/>
            <person name="Schmutz J."/>
            <person name="Larimer F."/>
            <person name="Land M."/>
            <person name="Hauser L."/>
            <person name="Kyrpides N."/>
            <person name="Kim E."/>
            <person name="Zhao J.-S."/>
            <person name="Richardson P."/>
        </authorList>
    </citation>
    <scope>NUCLEOTIDE SEQUENCE [LARGE SCALE GENOMIC DNA]</scope>
    <source>
        <strain>HAW-EB4</strain>
    </source>
</reference>
<proteinExistence type="inferred from homology"/>
<comment type="function">
    <text evidence="1">Catalyzes the ATP-dependent amination of UTP to CTP with either L-glutamine or ammonia as the source of nitrogen. Regulates intracellular CTP levels through interactions with the four ribonucleotide triphosphates.</text>
</comment>
<comment type="catalytic activity">
    <reaction evidence="1">
        <text>UTP + L-glutamine + ATP + H2O = CTP + L-glutamate + ADP + phosphate + 2 H(+)</text>
        <dbReference type="Rhea" id="RHEA:26426"/>
        <dbReference type="ChEBI" id="CHEBI:15377"/>
        <dbReference type="ChEBI" id="CHEBI:15378"/>
        <dbReference type="ChEBI" id="CHEBI:29985"/>
        <dbReference type="ChEBI" id="CHEBI:30616"/>
        <dbReference type="ChEBI" id="CHEBI:37563"/>
        <dbReference type="ChEBI" id="CHEBI:43474"/>
        <dbReference type="ChEBI" id="CHEBI:46398"/>
        <dbReference type="ChEBI" id="CHEBI:58359"/>
        <dbReference type="ChEBI" id="CHEBI:456216"/>
        <dbReference type="EC" id="6.3.4.2"/>
    </reaction>
</comment>
<comment type="catalytic activity">
    <reaction evidence="1">
        <text>L-glutamine + H2O = L-glutamate + NH4(+)</text>
        <dbReference type="Rhea" id="RHEA:15889"/>
        <dbReference type="ChEBI" id="CHEBI:15377"/>
        <dbReference type="ChEBI" id="CHEBI:28938"/>
        <dbReference type="ChEBI" id="CHEBI:29985"/>
        <dbReference type="ChEBI" id="CHEBI:58359"/>
    </reaction>
</comment>
<comment type="catalytic activity">
    <reaction evidence="1">
        <text>UTP + NH4(+) + ATP = CTP + ADP + phosphate + 2 H(+)</text>
        <dbReference type="Rhea" id="RHEA:16597"/>
        <dbReference type="ChEBI" id="CHEBI:15378"/>
        <dbReference type="ChEBI" id="CHEBI:28938"/>
        <dbReference type="ChEBI" id="CHEBI:30616"/>
        <dbReference type="ChEBI" id="CHEBI:37563"/>
        <dbReference type="ChEBI" id="CHEBI:43474"/>
        <dbReference type="ChEBI" id="CHEBI:46398"/>
        <dbReference type="ChEBI" id="CHEBI:456216"/>
    </reaction>
</comment>
<comment type="activity regulation">
    <text evidence="1">Allosterically activated by GTP, when glutamine is the substrate; GTP has no effect on the reaction when ammonia is the substrate. The allosteric effector GTP functions by stabilizing the protein conformation that binds the tetrahedral intermediate(s) formed during glutamine hydrolysis. Inhibited by the product CTP, via allosteric rather than competitive inhibition.</text>
</comment>
<comment type="pathway">
    <text evidence="1">Pyrimidine metabolism; CTP biosynthesis via de novo pathway; CTP from UDP: step 2/2.</text>
</comment>
<comment type="subunit">
    <text evidence="1">Homotetramer.</text>
</comment>
<comment type="miscellaneous">
    <text evidence="1">CTPSs have evolved a hybrid strategy for distinguishing between UTP and CTP. The overlapping regions of the product feedback inhibitory and substrate sites recognize a common feature in both compounds, the triphosphate moiety. To differentiate isosteric substrate and product pyrimidine rings, an additional pocket far from the expected kinase/ligase catalytic site, specifically recognizes the cytosine and ribose portions of the product inhibitor.</text>
</comment>
<comment type="similarity">
    <text evidence="1">Belongs to the CTP synthase family.</text>
</comment>
<accession>B0TK03</accession>
<organism>
    <name type="scientific">Shewanella halifaxensis (strain HAW-EB4)</name>
    <dbReference type="NCBI Taxonomy" id="458817"/>
    <lineage>
        <taxon>Bacteria</taxon>
        <taxon>Pseudomonadati</taxon>
        <taxon>Pseudomonadota</taxon>
        <taxon>Gammaproteobacteria</taxon>
        <taxon>Alteromonadales</taxon>
        <taxon>Shewanellaceae</taxon>
        <taxon>Shewanella</taxon>
    </lineage>
</organism>
<evidence type="ECO:0000255" key="1">
    <source>
        <dbReference type="HAMAP-Rule" id="MF_01227"/>
    </source>
</evidence>
<feature type="chain" id="PRO_1000139571" description="CTP synthase">
    <location>
        <begin position="1"/>
        <end position="546"/>
    </location>
</feature>
<feature type="domain" description="Glutamine amidotransferase type-1" evidence="1">
    <location>
        <begin position="291"/>
        <end position="542"/>
    </location>
</feature>
<feature type="region of interest" description="Amidoligase domain" evidence="1">
    <location>
        <begin position="1"/>
        <end position="266"/>
    </location>
</feature>
<feature type="active site" description="Nucleophile; for glutamine hydrolysis" evidence="1">
    <location>
        <position position="379"/>
    </location>
</feature>
<feature type="active site" evidence="1">
    <location>
        <position position="515"/>
    </location>
</feature>
<feature type="active site" evidence="1">
    <location>
        <position position="517"/>
    </location>
</feature>
<feature type="binding site" evidence="1">
    <location>
        <position position="14"/>
    </location>
    <ligand>
        <name>CTP</name>
        <dbReference type="ChEBI" id="CHEBI:37563"/>
        <note>allosteric inhibitor</note>
    </ligand>
</feature>
<feature type="binding site" evidence="1">
    <location>
        <position position="14"/>
    </location>
    <ligand>
        <name>UTP</name>
        <dbReference type="ChEBI" id="CHEBI:46398"/>
    </ligand>
</feature>
<feature type="binding site" evidence="1">
    <location>
        <begin position="15"/>
        <end position="20"/>
    </location>
    <ligand>
        <name>ATP</name>
        <dbReference type="ChEBI" id="CHEBI:30616"/>
    </ligand>
</feature>
<feature type="binding site" evidence="1">
    <location>
        <position position="72"/>
    </location>
    <ligand>
        <name>ATP</name>
        <dbReference type="ChEBI" id="CHEBI:30616"/>
    </ligand>
</feature>
<feature type="binding site" evidence="1">
    <location>
        <position position="72"/>
    </location>
    <ligand>
        <name>Mg(2+)</name>
        <dbReference type="ChEBI" id="CHEBI:18420"/>
    </ligand>
</feature>
<feature type="binding site" evidence="1">
    <location>
        <position position="140"/>
    </location>
    <ligand>
        <name>Mg(2+)</name>
        <dbReference type="ChEBI" id="CHEBI:18420"/>
    </ligand>
</feature>
<feature type="binding site" evidence="1">
    <location>
        <begin position="147"/>
        <end position="149"/>
    </location>
    <ligand>
        <name>CTP</name>
        <dbReference type="ChEBI" id="CHEBI:37563"/>
        <note>allosteric inhibitor</note>
    </ligand>
</feature>
<feature type="binding site" evidence="1">
    <location>
        <begin position="187"/>
        <end position="192"/>
    </location>
    <ligand>
        <name>CTP</name>
        <dbReference type="ChEBI" id="CHEBI:37563"/>
        <note>allosteric inhibitor</note>
    </ligand>
</feature>
<feature type="binding site" evidence="1">
    <location>
        <begin position="187"/>
        <end position="192"/>
    </location>
    <ligand>
        <name>UTP</name>
        <dbReference type="ChEBI" id="CHEBI:46398"/>
    </ligand>
</feature>
<feature type="binding site" evidence="1">
    <location>
        <position position="223"/>
    </location>
    <ligand>
        <name>CTP</name>
        <dbReference type="ChEBI" id="CHEBI:37563"/>
        <note>allosteric inhibitor</note>
    </ligand>
</feature>
<feature type="binding site" evidence="1">
    <location>
        <position position="223"/>
    </location>
    <ligand>
        <name>UTP</name>
        <dbReference type="ChEBI" id="CHEBI:46398"/>
    </ligand>
</feature>
<feature type="binding site" evidence="1">
    <location>
        <begin position="239"/>
        <end position="241"/>
    </location>
    <ligand>
        <name>ATP</name>
        <dbReference type="ChEBI" id="CHEBI:30616"/>
    </ligand>
</feature>
<feature type="binding site" evidence="1">
    <location>
        <position position="352"/>
    </location>
    <ligand>
        <name>L-glutamine</name>
        <dbReference type="ChEBI" id="CHEBI:58359"/>
    </ligand>
</feature>
<feature type="binding site" evidence="1">
    <location>
        <begin position="380"/>
        <end position="383"/>
    </location>
    <ligand>
        <name>L-glutamine</name>
        <dbReference type="ChEBI" id="CHEBI:58359"/>
    </ligand>
</feature>
<feature type="binding site" evidence="1">
    <location>
        <position position="403"/>
    </location>
    <ligand>
        <name>L-glutamine</name>
        <dbReference type="ChEBI" id="CHEBI:58359"/>
    </ligand>
</feature>
<feature type="binding site" evidence="1">
    <location>
        <position position="470"/>
    </location>
    <ligand>
        <name>L-glutamine</name>
        <dbReference type="ChEBI" id="CHEBI:58359"/>
    </ligand>
</feature>
<keyword id="KW-0067">ATP-binding</keyword>
<keyword id="KW-0315">Glutamine amidotransferase</keyword>
<keyword id="KW-0436">Ligase</keyword>
<keyword id="KW-0460">Magnesium</keyword>
<keyword id="KW-0479">Metal-binding</keyword>
<keyword id="KW-0547">Nucleotide-binding</keyword>
<keyword id="KW-0665">Pyrimidine biosynthesis</keyword>
<protein>
    <recommendedName>
        <fullName evidence="1">CTP synthase</fullName>
        <ecNumber evidence="1">6.3.4.2</ecNumber>
    </recommendedName>
    <alternativeName>
        <fullName evidence="1">Cytidine 5'-triphosphate synthase</fullName>
    </alternativeName>
    <alternativeName>
        <fullName evidence="1">Cytidine triphosphate synthetase</fullName>
        <shortName evidence="1">CTP synthetase</shortName>
        <shortName evidence="1">CTPS</shortName>
    </alternativeName>
    <alternativeName>
        <fullName evidence="1">UTP--ammonia ligase</fullName>
    </alternativeName>
</protein>
<dbReference type="EC" id="6.3.4.2" evidence="1"/>
<dbReference type="EMBL" id="CP000931">
    <property type="protein sequence ID" value="ABZ75790.1"/>
    <property type="molecule type" value="Genomic_DNA"/>
</dbReference>
<dbReference type="RefSeq" id="WP_012276332.1">
    <property type="nucleotide sequence ID" value="NC_010334.1"/>
</dbReference>
<dbReference type="SMR" id="B0TK03"/>
<dbReference type="STRING" id="458817.Shal_1221"/>
<dbReference type="KEGG" id="shl:Shal_1221"/>
<dbReference type="eggNOG" id="COG0504">
    <property type="taxonomic scope" value="Bacteria"/>
</dbReference>
<dbReference type="HOGENOM" id="CLU_011675_5_0_6"/>
<dbReference type="OrthoDB" id="9801107at2"/>
<dbReference type="UniPathway" id="UPA00159">
    <property type="reaction ID" value="UER00277"/>
</dbReference>
<dbReference type="Proteomes" id="UP000001317">
    <property type="component" value="Chromosome"/>
</dbReference>
<dbReference type="GO" id="GO:0005829">
    <property type="term" value="C:cytosol"/>
    <property type="evidence" value="ECO:0007669"/>
    <property type="project" value="TreeGrafter"/>
</dbReference>
<dbReference type="GO" id="GO:0005524">
    <property type="term" value="F:ATP binding"/>
    <property type="evidence" value="ECO:0007669"/>
    <property type="project" value="UniProtKB-KW"/>
</dbReference>
<dbReference type="GO" id="GO:0003883">
    <property type="term" value="F:CTP synthase activity"/>
    <property type="evidence" value="ECO:0007669"/>
    <property type="project" value="UniProtKB-UniRule"/>
</dbReference>
<dbReference type="GO" id="GO:0004359">
    <property type="term" value="F:glutaminase activity"/>
    <property type="evidence" value="ECO:0007669"/>
    <property type="project" value="RHEA"/>
</dbReference>
<dbReference type="GO" id="GO:0042802">
    <property type="term" value="F:identical protein binding"/>
    <property type="evidence" value="ECO:0007669"/>
    <property type="project" value="TreeGrafter"/>
</dbReference>
<dbReference type="GO" id="GO:0046872">
    <property type="term" value="F:metal ion binding"/>
    <property type="evidence" value="ECO:0007669"/>
    <property type="project" value="UniProtKB-KW"/>
</dbReference>
<dbReference type="GO" id="GO:0044210">
    <property type="term" value="P:'de novo' CTP biosynthetic process"/>
    <property type="evidence" value="ECO:0007669"/>
    <property type="project" value="UniProtKB-UniRule"/>
</dbReference>
<dbReference type="GO" id="GO:0019856">
    <property type="term" value="P:pyrimidine nucleobase biosynthetic process"/>
    <property type="evidence" value="ECO:0007669"/>
    <property type="project" value="TreeGrafter"/>
</dbReference>
<dbReference type="CDD" id="cd03113">
    <property type="entry name" value="CTPS_N"/>
    <property type="match status" value="1"/>
</dbReference>
<dbReference type="CDD" id="cd01746">
    <property type="entry name" value="GATase1_CTP_Synthase"/>
    <property type="match status" value="1"/>
</dbReference>
<dbReference type="FunFam" id="3.40.50.300:FF:000009">
    <property type="entry name" value="CTP synthase"/>
    <property type="match status" value="1"/>
</dbReference>
<dbReference type="FunFam" id="3.40.50.880:FF:000002">
    <property type="entry name" value="CTP synthase"/>
    <property type="match status" value="1"/>
</dbReference>
<dbReference type="Gene3D" id="3.40.50.880">
    <property type="match status" value="1"/>
</dbReference>
<dbReference type="Gene3D" id="3.40.50.300">
    <property type="entry name" value="P-loop containing nucleotide triphosphate hydrolases"/>
    <property type="match status" value="1"/>
</dbReference>
<dbReference type="HAMAP" id="MF_01227">
    <property type="entry name" value="PyrG"/>
    <property type="match status" value="1"/>
</dbReference>
<dbReference type="InterPro" id="IPR029062">
    <property type="entry name" value="Class_I_gatase-like"/>
</dbReference>
<dbReference type="InterPro" id="IPR004468">
    <property type="entry name" value="CTP_synthase"/>
</dbReference>
<dbReference type="InterPro" id="IPR017456">
    <property type="entry name" value="CTP_synthase_N"/>
</dbReference>
<dbReference type="InterPro" id="IPR017926">
    <property type="entry name" value="GATASE"/>
</dbReference>
<dbReference type="InterPro" id="IPR033828">
    <property type="entry name" value="GATase1_CTP_Synthase"/>
</dbReference>
<dbReference type="InterPro" id="IPR027417">
    <property type="entry name" value="P-loop_NTPase"/>
</dbReference>
<dbReference type="NCBIfam" id="NF003792">
    <property type="entry name" value="PRK05380.1"/>
    <property type="match status" value="1"/>
</dbReference>
<dbReference type="NCBIfam" id="TIGR00337">
    <property type="entry name" value="PyrG"/>
    <property type="match status" value="1"/>
</dbReference>
<dbReference type="PANTHER" id="PTHR11550">
    <property type="entry name" value="CTP SYNTHASE"/>
    <property type="match status" value="1"/>
</dbReference>
<dbReference type="PANTHER" id="PTHR11550:SF0">
    <property type="entry name" value="CTP SYNTHASE-RELATED"/>
    <property type="match status" value="1"/>
</dbReference>
<dbReference type="Pfam" id="PF06418">
    <property type="entry name" value="CTP_synth_N"/>
    <property type="match status" value="1"/>
</dbReference>
<dbReference type="Pfam" id="PF00117">
    <property type="entry name" value="GATase"/>
    <property type="match status" value="1"/>
</dbReference>
<dbReference type="SUPFAM" id="SSF52317">
    <property type="entry name" value="Class I glutamine amidotransferase-like"/>
    <property type="match status" value="1"/>
</dbReference>
<dbReference type="SUPFAM" id="SSF52540">
    <property type="entry name" value="P-loop containing nucleoside triphosphate hydrolases"/>
    <property type="match status" value="1"/>
</dbReference>
<dbReference type="PROSITE" id="PS51273">
    <property type="entry name" value="GATASE_TYPE_1"/>
    <property type="match status" value="1"/>
</dbReference>
<sequence>MTTRYIFVTGGVVSSLGKGIAAASLAAILEARGLNVTIMKLDPYINVDPGTMSPTQHGEVFVTEDGAETDLDLGHYERFIRTKMNRRNNFTTGRIYEEVLRKERRGDYLGATIQVIPHITNAIKEKVLAGGEGHDVAIVEIGGTVGDIESLPFLESIRQLGVELGRDRTLFMHLTLVPFLGAAGEVKTKPTQHSVKELRSIGIAPDVLVCRGDRAIPANEKAKISLFCNVEERAVISLKDVDSIYKIPALLKAQGLDQLVTKRFGIDCKEADLAEWEKVVYQEANPVGEVTIGMVGKYIELPDAYKSVNEALKHAGLFNRVSVNIKYIDSQNVEAKGDEVLQGLDGILVPGGFGERGVEGKIMAAQFARENNLPYFGICLGMQVALIEFARHVAGLEGAHSTEFDKNTPHPVVGLITEWINEDGQVEERHEESDLGGTMRLGAQLCHLEEGTKAAAAYKSTTCVERHRHRYEVNNNYKERLEKAGLIFSGLSSDRSLVEMIELPNHPWFVAGQFHPEFTSTPRDGQPLFEGFVAAAYTYQKRDLED</sequence>